<feature type="signal peptide" evidence="2">
    <location>
        <begin position="1"/>
        <end position="24"/>
    </location>
</feature>
<feature type="chain" id="PRO_5010683600" description="Inactive serine protease scarface" evidence="2">
    <location>
        <begin position="25"/>
        <end position="655"/>
    </location>
</feature>
<feature type="domain" description="Peptidase S1" evidence="3">
    <location>
        <begin position="421"/>
        <end position="644"/>
    </location>
</feature>
<feature type="region of interest" description="Disordered" evidence="4">
    <location>
        <begin position="213"/>
        <end position="319"/>
    </location>
</feature>
<feature type="region of interest" description="CLIP" evidence="2">
    <location>
        <begin position="343"/>
        <end position="407"/>
    </location>
</feature>
<feature type="compositionally biased region" description="Polar residues" evidence="4">
    <location>
        <begin position="213"/>
        <end position="225"/>
    </location>
</feature>
<feature type="compositionally biased region" description="Polar residues" evidence="4">
    <location>
        <begin position="237"/>
        <end position="252"/>
    </location>
</feature>
<feature type="disulfide bond" evidence="1">
    <location>
        <begin position="344"/>
        <end position="394"/>
    </location>
</feature>
<feature type="disulfide bond" evidence="1">
    <location>
        <begin position="350"/>
        <end position="383"/>
    </location>
</feature>
<feature type="disulfide bond" evidence="1">
    <location>
        <begin position="356"/>
        <end position="395"/>
    </location>
</feature>
<feature type="disulfide bond" evidence="3">
    <location>
        <begin position="450"/>
        <end position="466"/>
    </location>
</feature>
<feature type="disulfide bond" evidence="3">
    <location>
        <begin position="547"/>
        <end position="605"/>
    </location>
</feature>
<feature type="disulfide bond" evidence="3">
    <location>
        <begin position="579"/>
        <end position="587"/>
    </location>
</feature>
<feature type="disulfide bond" evidence="3">
    <location>
        <begin position="595"/>
        <end position="623"/>
    </location>
</feature>
<proteinExistence type="evidence at protein level"/>
<dbReference type="EMBL" id="AE013599">
    <property type="protein sequence ID" value="AAF57320.2"/>
    <property type="molecule type" value="Genomic_DNA"/>
</dbReference>
<dbReference type="EMBL" id="AE013599">
    <property type="protein sequence ID" value="AAM68354.1"/>
    <property type="molecule type" value="Genomic_DNA"/>
</dbReference>
<dbReference type="EMBL" id="AY047548">
    <property type="protein sequence ID" value="AAK77280.1"/>
    <property type="molecule type" value="mRNA"/>
</dbReference>
<dbReference type="RefSeq" id="NP_610180.1">
    <property type="nucleotide sequence ID" value="NM_136336.3"/>
</dbReference>
<dbReference type="RefSeq" id="NP_724424.1">
    <property type="nucleotide sequence ID" value="NM_165441.2"/>
</dbReference>
<dbReference type="SMR" id="Q7K5M0"/>
<dbReference type="FunCoup" id="Q7K5M0">
    <property type="interactions" value="3"/>
</dbReference>
<dbReference type="IntAct" id="Q7K5M0">
    <property type="interactions" value="14"/>
</dbReference>
<dbReference type="STRING" id="7227.FBpp0085397"/>
<dbReference type="GlyGen" id="Q7K5M0">
    <property type="glycosylation" value="1 site"/>
</dbReference>
<dbReference type="PaxDb" id="7227-FBpp0085396"/>
<dbReference type="DNASU" id="35505"/>
<dbReference type="EnsemblMetazoa" id="FBtr0086060">
    <property type="protein sequence ID" value="FBpp0085396"/>
    <property type="gene ID" value="FBgn0033033"/>
</dbReference>
<dbReference type="EnsemblMetazoa" id="FBtr0086061">
    <property type="protein sequence ID" value="FBpp0085397"/>
    <property type="gene ID" value="FBgn0033033"/>
</dbReference>
<dbReference type="GeneID" id="35505"/>
<dbReference type="KEGG" id="dme:Dmel_CG11066"/>
<dbReference type="UCSC" id="CG11066-RA">
    <property type="organism name" value="d. melanogaster"/>
</dbReference>
<dbReference type="AGR" id="FB:FBgn0033033"/>
<dbReference type="CTD" id="35505"/>
<dbReference type="FlyBase" id="FBgn0033033">
    <property type="gene designation" value="scaf"/>
</dbReference>
<dbReference type="VEuPathDB" id="VectorBase:FBgn0033033"/>
<dbReference type="eggNOG" id="KOG3627">
    <property type="taxonomic scope" value="Eukaryota"/>
</dbReference>
<dbReference type="GeneTree" id="ENSGT00940000170789"/>
<dbReference type="HOGENOM" id="CLU_387467_0_0_1"/>
<dbReference type="InParanoid" id="Q7K5M0"/>
<dbReference type="OMA" id="TKFDACE"/>
<dbReference type="OrthoDB" id="10064156at2759"/>
<dbReference type="PhylomeDB" id="Q7K5M0"/>
<dbReference type="BioGRID-ORCS" id="35505">
    <property type="hits" value="0 hits in 1 CRISPR screen"/>
</dbReference>
<dbReference type="ChiTaRS" id="scaf">
    <property type="organism name" value="fly"/>
</dbReference>
<dbReference type="GenomeRNAi" id="35505"/>
<dbReference type="PRO" id="PR:Q7K5M0"/>
<dbReference type="Proteomes" id="UP000000803">
    <property type="component" value="Chromosome 2R"/>
</dbReference>
<dbReference type="Bgee" id="FBgn0033033">
    <property type="expression patterns" value="Expressed in tormogen cell in proboscis and 65 other cell types or tissues"/>
</dbReference>
<dbReference type="GO" id="GO:0005737">
    <property type="term" value="C:cytoplasm"/>
    <property type="evidence" value="ECO:0000314"/>
    <property type="project" value="UniProtKB"/>
</dbReference>
<dbReference type="GO" id="GO:0005576">
    <property type="term" value="C:extracellular region"/>
    <property type="evidence" value="ECO:0000314"/>
    <property type="project" value="UniProtKB"/>
</dbReference>
<dbReference type="GO" id="GO:0005615">
    <property type="term" value="C:extracellular space"/>
    <property type="evidence" value="ECO:0000314"/>
    <property type="project" value="FlyBase"/>
</dbReference>
<dbReference type="GO" id="GO:0007391">
    <property type="term" value="P:dorsal closure"/>
    <property type="evidence" value="ECO:0000315"/>
    <property type="project" value="UniProtKB"/>
</dbReference>
<dbReference type="GO" id="GO:0007394">
    <property type="term" value="P:dorsal closure, elongation of leading edge cells"/>
    <property type="evidence" value="ECO:0000315"/>
    <property type="project" value="UniProtKB"/>
</dbReference>
<dbReference type="GO" id="GO:0045197">
    <property type="term" value="P:establishment or maintenance of epithelial cell apical/basal polarity"/>
    <property type="evidence" value="ECO:0000315"/>
    <property type="project" value="UniProtKB"/>
</dbReference>
<dbReference type="GO" id="GO:0007390">
    <property type="term" value="P:germ-band shortening"/>
    <property type="evidence" value="ECO:0000315"/>
    <property type="project" value="UniProtKB"/>
</dbReference>
<dbReference type="GO" id="GO:0007560">
    <property type="term" value="P:imaginal disc morphogenesis"/>
    <property type="evidence" value="ECO:0000315"/>
    <property type="project" value="UniProtKB"/>
</dbReference>
<dbReference type="GO" id="GO:0048803">
    <property type="term" value="P:imaginal disc-derived male genitalia morphogenesis"/>
    <property type="evidence" value="ECO:0000315"/>
    <property type="project" value="FlyBase"/>
</dbReference>
<dbReference type="GO" id="GO:0045087">
    <property type="term" value="P:innate immune response"/>
    <property type="evidence" value="ECO:0000318"/>
    <property type="project" value="GO_Central"/>
</dbReference>
<dbReference type="GO" id="GO:0048802">
    <property type="term" value="P:notum morphogenesis"/>
    <property type="evidence" value="ECO:0000315"/>
    <property type="project" value="UniProtKB"/>
</dbReference>
<dbReference type="GO" id="GO:0006508">
    <property type="term" value="P:proteolysis"/>
    <property type="evidence" value="ECO:0007669"/>
    <property type="project" value="InterPro"/>
</dbReference>
<dbReference type="GO" id="GO:0050793">
    <property type="term" value="P:regulation of developmental process"/>
    <property type="evidence" value="ECO:0000315"/>
    <property type="project" value="UniProtKB"/>
</dbReference>
<dbReference type="CDD" id="cd00190">
    <property type="entry name" value="Tryp_SPc"/>
    <property type="match status" value="1"/>
</dbReference>
<dbReference type="FunFam" id="2.40.10.10:FF:000068">
    <property type="entry name" value="transmembrane protease serine 2"/>
    <property type="match status" value="1"/>
</dbReference>
<dbReference type="Gene3D" id="2.40.10.10">
    <property type="entry name" value="Trypsin-like serine proteases"/>
    <property type="match status" value="1"/>
</dbReference>
<dbReference type="InterPro" id="IPR040973">
    <property type="entry name" value="CLIP_SPH_Scar"/>
</dbReference>
<dbReference type="InterPro" id="IPR009003">
    <property type="entry name" value="Peptidase_S1_PA"/>
</dbReference>
<dbReference type="InterPro" id="IPR043504">
    <property type="entry name" value="Peptidase_S1_PA_chymotrypsin"/>
</dbReference>
<dbReference type="InterPro" id="IPR001314">
    <property type="entry name" value="Peptidase_S1A"/>
</dbReference>
<dbReference type="InterPro" id="IPR001254">
    <property type="entry name" value="Trypsin_dom"/>
</dbReference>
<dbReference type="PANTHER" id="PTHR24250">
    <property type="entry name" value="CHYMOTRYPSIN-RELATED"/>
    <property type="match status" value="1"/>
</dbReference>
<dbReference type="PANTHER" id="PTHR24250:SF27">
    <property type="entry name" value="ELASTASE 2 LIKE"/>
    <property type="match status" value="1"/>
</dbReference>
<dbReference type="Pfam" id="PF18399">
    <property type="entry name" value="CLIP_SPH_Scar"/>
    <property type="match status" value="1"/>
</dbReference>
<dbReference type="Pfam" id="PF00089">
    <property type="entry name" value="Trypsin"/>
    <property type="match status" value="1"/>
</dbReference>
<dbReference type="PRINTS" id="PR00722">
    <property type="entry name" value="CHYMOTRYPSIN"/>
</dbReference>
<dbReference type="SMART" id="SM00020">
    <property type="entry name" value="Tryp_SPc"/>
    <property type="match status" value="1"/>
</dbReference>
<dbReference type="SUPFAM" id="SSF50494">
    <property type="entry name" value="Trypsin-like serine proteases"/>
    <property type="match status" value="1"/>
</dbReference>
<dbReference type="PROSITE" id="PS50240">
    <property type="entry name" value="TRYPSIN_DOM"/>
    <property type="match status" value="1"/>
</dbReference>
<protein>
    <recommendedName>
        <fullName evidence="10 11">Inactive serine protease scarface</fullName>
    </recommendedName>
</protein>
<sequence length="655" mass="71417">MSASHFREQLALCITLAVLAAASGDYRANMFLNGQYQNGIKDQKENNLLVNPSTNVFLNHAIISRQASPFQGPTYLPPKEFLKCAPGQQCVRSGQCLNGYFAQQLPKIQNCDPETTVCCTYRPPPTTTTTTTTSVPVANCAYDSDCVTPDNCRNGEISAINYVKKQGPNRCPAPNICCRIPSTTLTEDGYIFNLPEKTFPLPTKPAVLAMPSTQAPFRPQPTTAVPASRPTIEYLPPSTTQHPSYEKVQTSRRPVYLPPSPATESASSLIPKIRPRPEPRPQPTRRPTNEYLPPAAANEIPRFEPDRAPQPSNQKPIYRGEDQLSPQIFPTPQPANVPKHFAKCASALVCTSENFCNAIGVLSETPVELSPMEAAFRVPLTDCLQTENGSPGKCCRDPNYVDPWPVNLAGVCATRNKRTKPTGVKDLDANFAEIPWQAMILRESSKTLICGGAIIGDQFVLSSASCVNGLPVTDIRVKAGEWELGSTNEPLPFQLTGVKTVDVHPDYDPSTNSHDLAIIRLERRLEFASHIQPICISDEDPKDSEQCFTSGWGKQALSIHEEGALMHVTDTLPQARSECSADSSSVCSATKFDSCQFDVGSALACGSGSSVRLKGIFAGENSCGEGQTVRFAKPDIKWINTAFAENNKPLLLKRF</sequence>
<name>SCARF_DROME</name>
<evidence type="ECO:0000250" key="1">
    <source>
        <dbReference type="UniProtKB" id="Q9VB68"/>
    </source>
</evidence>
<evidence type="ECO:0000255" key="2"/>
<evidence type="ECO:0000255" key="3">
    <source>
        <dbReference type="PROSITE-ProRule" id="PRU00274"/>
    </source>
</evidence>
<evidence type="ECO:0000256" key="4">
    <source>
        <dbReference type="SAM" id="MobiDB-lite"/>
    </source>
</evidence>
<evidence type="ECO:0000269" key="5">
    <source>
    </source>
</evidence>
<evidence type="ECO:0000269" key="6">
    <source>
    </source>
</evidence>
<evidence type="ECO:0000269" key="7">
    <source>
    </source>
</evidence>
<evidence type="ECO:0000269" key="8">
    <source>
    </source>
</evidence>
<evidence type="ECO:0000269" key="9">
    <source>
    </source>
</evidence>
<evidence type="ECO:0000303" key="10">
    <source>
    </source>
</evidence>
<evidence type="ECO:0000303" key="11">
    <source>
    </source>
</evidence>
<evidence type="ECO:0000303" key="12">
    <source>
    </source>
</evidence>
<evidence type="ECO:0000305" key="13"/>
<evidence type="ECO:0000312" key="14">
    <source>
        <dbReference type="EMBL" id="AAK77280.1"/>
    </source>
</evidence>
<evidence type="ECO:0000312" key="15">
    <source>
        <dbReference type="FlyBase" id="FBgn0033033"/>
    </source>
</evidence>
<evidence type="ECO:0000312" key="16">
    <source>
        <dbReference type="Proteomes" id="UP000000803"/>
    </source>
</evidence>
<organism evidence="16">
    <name type="scientific">Drosophila melanogaster</name>
    <name type="common">Fruit fly</name>
    <dbReference type="NCBI Taxonomy" id="7227"/>
    <lineage>
        <taxon>Eukaryota</taxon>
        <taxon>Metazoa</taxon>
        <taxon>Ecdysozoa</taxon>
        <taxon>Arthropoda</taxon>
        <taxon>Hexapoda</taxon>
        <taxon>Insecta</taxon>
        <taxon>Pterygota</taxon>
        <taxon>Neoptera</taxon>
        <taxon>Endopterygota</taxon>
        <taxon>Diptera</taxon>
        <taxon>Brachycera</taxon>
        <taxon>Muscomorpha</taxon>
        <taxon>Ephydroidea</taxon>
        <taxon>Drosophilidae</taxon>
        <taxon>Drosophila</taxon>
        <taxon>Sophophora</taxon>
    </lineage>
</organism>
<keyword id="KW-0217">Developmental protein</keyword>
<keyword id="KW-1015">Disulfide bond</keyword>
<keyword id="KW-1185">Reference proteome</keyword>
<keyword id="KW-0964">Secreted</keyword>
<keyword id="KW-0721">Serine protease homolog</keyword>
<keyword id="KW-0732">Signal</keyword>
<comment type="function">
    <text evidence="6 7 8 9">Inactive serine protease that plays a role in germ-band retraction and dorsal closure morphogenesis in embryogenesis; contributes to amnioserosa attachment and epithelial apico-basal polarity by regulating the localization of laminin LanA on the apical side of the amnioserosa epithelium (PubMed:20379222, PubMed:28628612). Contributes to epithelial morphogenesis probably by regulating the bsk/JNK pathway, as part of a negative-feedback loop, and by modulating the cross-talk between the Egfr, bsk/JNK and dpp signal transduction pathways (PubMed:20379222, PubMed:28628612). In larval development, antagonizes the morphogenetic movements controlled by the bsk/JNK signaling including male genitalia formation and thorax development (PubMed:20379222, PubMed:20530545, PubMed:25737837).</text>
</comment>
<comment type="subcellular location">
    <subcellularLocation>
        <location evidence="5 6 7">Secreted</location>
    </subcellularLocation>
</comment>
<comment type="developmental stage">
    <text evidence="5 6 7 8 9">In embryos, expressed in leading edge (LE) cells (at protein level) (PubMed:20530545). In larvae, expressed in the wing imaginal disk cells in the future hinge region, specifically in the peripodial stalk and in the peripodial membrane cells (at protein level) (PubMed:15342518, PubMed:25737837). In larvae, expressed in the A8 abdomen-derived cells in the male genital disk (at protein level) (PubMed:20530545). In third instar larvae, expressed in the anterior and posterios termini (at protein level) (PubMed:15342518). In adult fly, expressed in the wing hinge, in the socket cells of the micro- and macrochaete and proboscis (at protein level) (PubMed:15342518). In embryos, expressed in leading edge (LE) cells during germ-band retraction and dorsal closure from stage 13; expressed in some cells of the amnioserosa in particular in the posterior canthus as well as in the ventral ectoderm; expressed both in head and tail region (PubMed:20379222, PubMed:20530545, PubMed:28628612).</text>
</comment>
<comment type="domain">
    <text evidence="13">The CLIP domain consists of 37-55 residues which are 'knitted' together usually by 3 conserved disulfide bonds forming a clip-like compact structure.</text>
</comment>
<comment type="disruption phenotype">
    <text evidence="5 6 7 8">Embryonic lethal due to defects in the dorsal closure and germ-band retraction; these defects include undifferentiated or defective larval cuticles presenting dorsal holes and wrinkles, defective attachment of the amnioserosa to the tail end of the germ band, defective elongation of the lateral ectoderm with compromised interface between the LE cells and the amnioserosa (PubMed:15342518, PubMed:20379222, PubMed:20530545). RNAi-mediated knockdown results in pupal lethality and scarring (PubMed:25737837). RNAi-mediated knockdown in the epidermis results in loss of wing veins and thorax mechanosensory bristles as well as male terminalia malformations including genitalia rotation defects and partial dissociation of the genital plate from the abdomen (PubMed:20530545). RNAi-mediated knockdown in the dorsal compartment of the wing disk results in loss of bristles from the medio-lateral region of the thorax and in the appearance of a mild thoracic cleft (PubMed:25737837). RNAi-mediated knockdown in the notum area of the wing disk, destined to form the dorsal medio-lateral region of the adult thorax as well as thoracic bristles, results in a thoracic cleft and loss of bristles from the medio-lateral region of the thorax (PubMed:25737837).</text>
</comment>
<comment type="similarity">
    <text evidence="3">Belongs to the peptidase S1 family.</text>
</comment>
<comment type="caution">
    <text evidence="11">Lacks the conserved residues within the catalytic triad, probably resulting in a loss of proteolytic activity.</text>
</comment>
<gene>
    <name evidence="12 15" type="primary">scaf</name>
    <name evidence="11" type="synonym">scarf</name>
    <name evidence="15" type="ORF">CG11066</name>
</gene>
<accession>Q7K5M0</accession>
<reference evidence="16" key="1">
    <citation type="journal article" date="2000" name="Science">
        <title>The genome sequence of Drosophila melanogaster.</title>
        <authorList>
            <person name="Adams M.D."/>
            <person name="Celniker S.E."/>
            <person name="Holt R.A."/>
            <person name="Evans C.A."/>
            <person name="Gocayne J.D."/>
            <person name="Amanatides P.G."/>
            <person name="Scherer S.E."/>
            <person name="Li P.W."/>
            <person name="Hoskins R.A."/>
            <person name="Galle R.F."/>
            <person name="George R.A."/>
            <person name="Lewis S.E."/>
            <person name="Richards S."/>
            <person name="Ashburner M."/>
            <person name="Henderson S.N."/>
            <person name="Sutton G.G."/>
            <person name="Wortman J.R."/>
            <person name="Yandell M.D."/>
            <person name="Zhang Q."/>
            <person name="Chen L.X."/>
            <person name="Brandon R.C."/>
            <person name="Rogers Y.-H.C."/>
            <person name="Blazej R.G."/>
            <person name="Champe M."/>
            <person name="Pfeiffer B.D."/>
            <person name="Wan K.H."/>
            <person name="Doyle C."/>
            <person name="Baxter E.G."/>
            <person name="Helt G."/>
            <person name="Nelson C.R."/>
            <person name="Miklos G.L.G."/>
            <person name="Abril J.F."/>
            <person name="Agbayani A."/>
            <person name="An H.-J."/>
            <person name="Andrews-Pfannkoch C."/>
            <person name="Baldwin D."/>
            <person name="Ballew R.M."/>
            <person name="Basu A."/>
            <person name="Baxendale J."/>
            <person name="Bayraktaroglu L."/>
            <person name="Beasley E.M."/>
            <person name="Beeson K.Y."/>
            <person name="Benos P.V."/>
            <person name="Berman B.P."/>
            <person name="Bhandari D."/>
            <person name="Bolshakov S."/>
            <person name="Borkova D."/>
            <person name="Botchan M.R."/>
            <person name="Bouck J."/>
            <person name="Brokstein P."/>
            <person name="Brottier P."/>
            <person name="Burtis K.C."/>
            <person name="Busam D.A."/>
            <person name="Butler H."/>
            <person name="Cadieu E."/>
            <person name="Center A."/>
            <person name="Chandra I."/>
            <person name="Cherry J.M."/>
            <person name="Cawley S."/>
            <person name="Dahlke C."/>
            <person name="Davenport L.B."/>
            <person name="Davies P."/>
            <person name="de Pablos B."/>
            <person name="Delcher A."/>
            <person name="Deng Z."/>
            <person name="Mays A.D."/>
            <person name="Dew I."/>
            <person name="Dietz S.M."/>
            <person name="Dodson K."/>
            <person name="Doup L.E."/>
            <person name="Downes M."/>
            <person name="Dugan-Rocha S."/>
            <person name="Dunkov B.C."/>
            <person name="Dunn P."/>
            <person name="Durbin K.J."/>
            <person name="Evangelista C.C."/>
            <person name="Ferraz C."/>
            <person name="Ferriera S."/>
            <person name="Fleischmann W."/>
            <person name="Fosler C."/>
            <person name="Gabrielian A.E."/>
            <person name="Garg N.S."/>
            <person name="Gelbart W.M."/>
            <person name="Glasser K."/>
            <person name="Glodek A."/>
            <person name="Gong F."/>
            <person name="Gorrell J.H."/>
            <person name="Gu Z."/>
            <person name="Guan P."/>
            <person name="Harris M."/>
            <person name="Harris N.L."/>
            <person name="Harvey D.A."/>
            <person name="Heiman T.J."/>
            <person name="Hernandez J.R."/>
            <person name="Houck J."/>
            <person name="Hostin D."/>
            <person name="Houston K.A."/>
            <person name="Howland T.J."/>
            <person name="Wei M.-H."/>
            <person name="Ibegwam C."/>
            <person name="Jalali M."/>
            <person name="Kalush F."/>
            <person name="Karpen G.H."/>
            <person name="Ke Z."/>
            <person name="Kennison J.A."/>
            <person name="Ketchum K.A."/>
            <person name="Kimmel B.E."/>
            <person name="Kodira C.D."/>
            <person name="Kraft C.L."/>
            <person name="Kravitz S."/>
            <person name="Kulp D."/>
            <person name="Lai Z."/>
            <person name="Lasko P."/>
            <person name="Lei Y."/>
            <person name="Levitsky A.A."/>
            <person name="Li J.H."/>
            <person name="Li Z."/>
            <person name="Liang Y."/>
            <person name="Lin X."/>
            <person name="Liu X."/>
            <person name="Mattei B."/>
            <person name="McIntosh T.C."/>
            <person name="McLeod M.P."/>
            <person name="McPherson D."/>
            <person name="Merkulov G."/>
            <person name="Milshina N.V."/>
            <person name="Mobarry C."/>
            <person name="Morris J."/>
            <person name="Moshrefi A."/>
            <person name="Mount S.M."/>
            <person name="Moy M."/>
            <person name="Murphy B."/>
            <person name="Murphy L."/>
            <person name="Muzny D.M."/>
            <person name="Nelson D.L."/>
            <person name="Nelson D.R."/>
            <person name="Nelson K.A."/>
            <person name="Nixon K."/>
            <person name="Nusskern D.R."/>
            <person name="Pacleb J.M."/>
            <person name="Palazzolo M."/>
            <person name="Pittman G.S."/>
            <person name="Pan S."/>
            <person name="Pollard J."/>
            <person name="Puri V."/>
            <person name="Reese M.G."/>
            <person name="Reinert K."/>
            <person name="Remington K."/>
            <person name="Saunders R.D.C."/>
            <person name="Scheeler F."/>
            <person name="Shen H."/>
            <person name="Shue B.C."/>
            <person name="Siden-Kiamos I."/>
            <person name="Simpson M."/>
            <person name="Skupski M.P."/>
            <person name="Smith T.J."/>
            <person name="Spier E."/>
            <person name="Spradling A.C."/>
            <person name="Stapleton M."/>
            <person name="Strong R."/>
            <person name="Sun E."/>
            <person name="Svirskas R."/>
            <person name="Tector C."/>
            <person name="Turner R."/>
            <person name="Venter E."/>
            <person name="Wang A.H."/>
            <person name="Wang X."/>
            <person name="Wang Z.-Y."/>
            <person name="Wassarman D.A."/>
            <person name="Weinstock G.M."/>
            <person name="Weissenbach J."/>
            <person name="Williams S.M."/>
            <person name="Woodage T."/>
            <person name="Worley K.C."/>
            <person name="Wu D."/>
            <person name="Yang S."/>
            <person name="Yao Q.A."/>
            <person name="Ye J."/>
            <person name="Yeh R.-F."/>
            <person name="Zaveri J.S."/>
            <person name="Zhan M."/>
            <person name="Zhang G."/>
            <person name="Zhao Q."/>
            <person name="Zheng L."/>
            <person name="Zheng X.H."/>
            <person name="Zhong F.N."/>
            <person name="Zhong W."/>
            <person name="Zhou X."/>
            <person name="Zhu S.C."/>
            <person name="Zhu X."/>
            <person name="Smith H.O."/>
            <person name="Gibbs R.A."/>
            <person name="Myers E.W."/>
            <person name="Rubin G.M."/>
            <person name="Venter J.C."/>
        </authorList>
    </citation>
    <scope>NUCLEOTIDE SEQUENCE [LARGE SCALE GENOMIC DNA]</scope>
    <source>
        <strain evidence="16">Berkeley</strain>
    </source>
</reference>
<reference evidence="16" key="2">
    <citation type="journal article" date="2002" name="Genome Biol.">
        <title>Annotation of the Drosophila melanogaster euchromatic genome: a systematic review.</title>
        <authorList>
            <person name="Misra S."/>
            <person name="Crosby M.A."/>
            <person name="Mungall C.J."/>
            <person name="Matthews B.B."/>
            <person name="Campbell K.S."/>
            <person name="Hradecky P."/>
            <person name="Huang Y."/>
            <person name="Kaminker J.S."/>
            <person name="Millburn G.H."/>
            <person name="Prochnik S.E."/>
            <person name="Smith C.D."/>
            <person name="Tupy J.L."/>
            <person name="Whitfield E.J."/>
            <person name="Bayraktaroglu L."/>
            <person name="Berman B.P."/>
            <person name="Bettencourt B.R."/>
            <person name="Celniker S.E."/>
            <person name="de Grey A.D.N.J."/>
            <person name="Drysdale R.A."/>
            <person name="Harris N.L."/>
            <person name="Richter J."/>
            <person name="Russo S."/>
            <person name="Schroeder A.J."/>
            <person name="Shu S.Q."/>
            <person name="Stapleton M."/>
            <person name="Yamada C."/>
            <person name="Ashburner M."/>
            <person name="Gelbart W.M."/>
            <person name="Rubin G.M."/>
            <person name="Lewis S.E."/>
        </authorList>
    </citation>
    <scope>GENOME REANNOTATION</scope>
    <source>
        <strain evidence="16">Berkeley</strain>
    </source>
</reference>
<reference evidence="14" key="3">
    <citation type="journal article" date="2002" name="Genome Biol.">
        <title>A Drosophila full-length cDNA resource.</title>
        <authorList>
            <person name="Stapleton M."/>
            <person name="Carlson J.W."/>
            <person name="Brokstein P."/>
            <person name="Yu C."/>
            <person name="Champe M."/>
            <person name="George R.A."/>
            <person name="Guarin H."/>
            <person name="Kronmiller B."/>
            <person name="Pacleb J.M."/>
            <person name="Park S."/>
            <person name="Wan K.H."/>
            <person name="Rubin G.M."/>
            <person name="Celniker S.E."/>
        </authorList>
    </citation>
    <scope>NUCLEOTIDE SEQUENCE [LARGE SCALE MRNA]</scope>
    <source>
        <strain evidence="14">Berkeley</strain>
        <tissue evidence="14">Head</tissue>
    </source>
</reference>
<reference evidence="13" key="4">
    <citation type="journal article" date="2004" name="Genetics">
        <title>A piggyBac transposon gene trap for the analysis of gene expression and function in Drosophila.</title>
        <authorList>
            <person name="Bonin C.P."/>
            <person name="Mann R.S."/>
        </authorList>
    </citation>
    <scope>SUBCELLULAR LOCATION</scope>
    <scope>DEVELOPMENTAL STAGE</scope>
    <scope>DISRUPTION PHENOTYPE</scope>
</reference>
<reference evidence="13" key="5">
    <citation type="journal article" date="2010" name="EMBO Rep.">
        <title>Scarface, a secreted serine protease-like protein, regulates polarized localization of laminin A at the basement membrane of the Drosophila embryo.</title>
        <authorList>
            <person name="Sorrosal G."/>
            <person name="Perez L."/>
            <person name="Herranz H."/>
            <person name="Milan M."/>
        </authorList>
    </citation>
    <scope>FUNCTION</scope>
    <scope>SUBCELLULAR LOCATION</scope>
    <scope>DEVELOPMENTAL STAGE</scope>
    <scope>DISRUPTION PHENOTYPE</scope>
</reference>
<reference evidence="13" key="6">
    <citation type="journal article" date="2010" name="Development">
        <title>The Drosophila serine protease homologue Scarface regulates JNK signalling in a negative-feedback loop during epithelial morphogenesis.</title>
        <authorList>
            <person name="Rousset R."/>
            <person name="Bono-Lauriol S."/>
            <person name="Gettings M."/>
            <person name="Suzanne M."/>
            <person name="Speder P."/>
            <person name="Noselli S."/>
        </authorList>
    </citation>
    <scope>FUNCTION</scope>
    <scope>SUBCELLULAR LOCATION</scope>
    <scope>DEVELOPMENTAL STAGE</scope>
    <scope>DISRUPTION PHENOTYPE</scope>
</reference>
<reference evidence="13" key="7">
    <citation type="journal article" date="2015" name="FEBS Open Bio">
        <title>Regulation of a serine protease homolog by the JNK pathway during thoracic development of Drosophila melanogaster.</title>
        <authorList>
            <person name="Srivastava A."/>
            <person name="Dong Q."/>
        </authorList>
    </citation>
    <scope>FUNCTION</scope>
    <scope>DEVELOPMENTAL STAGE</scope>
    <scope>DISRUPTION PHENOTYPE</scope>
</reference>
<reference evidence="13" key="8">
    <citation type="journal article" date="2017" name="PLoS Genet.">
        <title>Novel interplay between JNK and Egfr signaling in Drosophila dorsal closure.</title>
        <authorList>
            <person name="Kushnir T."/>
            <person name="Mezuman S."/>
            <person name="Bar-Cohen S."/>
            <person name="Lange R."/>
            <person name="Paroush Z."/>
            <person name="Helman A."/>
        </authorList>
    </citation>
    <scope>FUNCTION</scope>
    <scope>DEVELOPMENTAL STAGE</scope>
</reference>